<evidence type="ECO:0000269" key="1">
    <source>
    </source>
</evidence>
<evidence type="ECO:0000269" key="2">
    <source>
    </source>
</evidence>
<sequence>FYRI</sequence>
<proteinExistence type="evidence at protein level"/>
<accession>P58706</accession>
<feature type="peptide" id="PRO_0000009891" description="Antho-RIamide-1">
    <location>
        <begin position="1"/>
        <end position="4"/>
    </location>
</feature>
<feature type="peptide" id="PRO_0000009892" description="Antho-RIamide-2">
    <location>
        <begin position="2"/>
        <end position="4"/>
    </location>
</feature>
<feature type="modified residue" description="3-phenyllactic acid">
    <location>
        <position position="1"/>
    </location>
</feature>
<feature type="modified residue" description="Isoleucine amide" evidence="1">
    <location>
        <position position="4"/>
    </location>
</feature>
<protein>
    <recommendedName>
        <fullName>Antho-RIamide-1</fullName>
    </recommendedName>
    <alternativeName>
        <fullName>Antho-RIamide I</fullName>
    </alternativeName>
    <component>
        <recommendedName>
            <fullName>Antho-RIamide-2</fullName>
        </recommendedName>
        <alternativeName>
            <fullName>Antho-RIamide II</fullName>
        </alternativeName>
    </component>
</protein>
<dbReference type="GO" id="GO:0005576">
    <property type="term" value="C:extracellular region"/>
    <property type="evidence" value="ECO:0007669"/>
    <property type="project" value="UniProtKB-SubCell"/>
</dbReference>
<dbReference type="GO" id="GO:0007218">
    <property type="term" value="P:neuropeptide signaling pathway"/>
    <property type="evidence" value="ECO:0007669"/>
    <property type="project" value="UniProtKB-KW"/>
</dbReference>
<reference key="1">
    <citation type="journal article" date="1991" name="Peptides">
        <title>Isolation of two novel neuropeptides from sea anemones: the unusual, biologically active L-3-phenyllactyl-Tyr-Arg-Ile-NH2 and its des-phenyllactyl fragment Tyr-Arg-Ile-NH2.</title>
        <authorList>
            <person name="Nothacker H.-P."/>
            <person name="Rinehart K.L. Jr."/>
            <person name="McFarlane I.D."/>
            <person name="Grimmelikhuijzen C.J.P."/>
        </authorList>
    </citation>
    <scope>PROTEIN SEQUENCE</scope>
    <scope>AMIDATION AT ILE-4</scope>
</reference>
<reference key="2">
    <citation type="journal article" date="1993" name="Proc. R. Soc. B">
        <title>The expansion behaviour of sea anemones may be coordinated by two inhibitory neuropeptides, Antho-KAamide and Antho-RIamide.</title>
        <authorList>
            <person name="McFarlane I.D."/>
            <person name="Hudman D."/>
            <person name="Nothacker H.-P."/>
            <person name="Grimmelikhuijzen C.J.P."/>
        </authorList>
    </citation>
    <scope>FUNCTION</scope>
</reference>
<name>FYRI_ANTEL</name>
<keyword id="KW-0027">Amidation</keyword>
<keyword id="KW-0903">Direct protein sequencing</keyword>
<keyword id="KW-0527">Neuropeptide</keyword>
<keyword id="KW-0964">Secreted</keyword>
<organism>
    <name type="scientific">Anthopleura elegantissima</name>
    <name type="common">Green aggregating anemone</name>
    <name type="synonym">Actinia elegantissima</name>
    <dbReference type="NCBI Taxonomy" id="6110"/>
    <lineage>
        <taxon>Eukaryota</taxon>
        <taxon>Metazoa</taxon>
        <taxon>Cnidaria</taxon>
        <taxon>Anthozoa</taxon>
        <taxon>Hexacorallia</taxon>
        <taxon>Actiniaria</taxon>
        <taxon>Actiniidae</taxon>
        <taxon>Anthopleura</taxon>
    </lineage>
</organism>
<comment type="function">
    <text evidence="2">Inhibits spontaneous contractions in several muscle groups. May be involved in the expansion phase of feeding behavior in sea anemones.</text>
</comment>
<comment type="subcellular location">
    <subcellularLocation>
        <location>Secreted</location>
    </subcellularLocation>
</comment>
<comment type="tissue specificity">
    <text>Neuron specific.</text>
</comment>